<feature type="chain" id="PRO_0000374610" description="tRNA-2-methylthio-N(6)-dimethylallyladenosine synthase">
    <location>
        <begin position="1"/>
        <end position="431"/>
    </location>
</feature>
<feature type="domain" description="MTTase N-terminal" evidence="1">
    <location>
        <begin position="4"/>
        <end position="120"/>
    </location>
</feature>
<feature type="domain" description="Radical SAM core" evidence="2">
    <location>
        <begin position="140"/>
        <end position="367"/>
    </location>
</feature>
<feature type="domain" description="TRAM" evidence="1">
    <location>
        <begin position="370"/>
        <end position="430"/>
    </location>
</feature>
<feature type="binding site" evidence="1">
    <location>
        <position position="13"/>
    </location>
    <ligand>
        <name>[4Fe-4S] cluster</name>
        <dbReference type="ChEBI" id="CHEBI:49883"/>
        <label>1</label>
    </ligand>
</feature>
<feature type="binding site" evidence="1">
    <location>
        <position position="49"/>
    </location>
    <ligand>
        <name>[4Fe-4S] cluster</name>
        <dbReference type="ChEBI" id="CHEBI:49883"/>
        <label>1</label>
    </ligand>
</feature>
<feature type="binding site" evidence="1">
    <location>
        <position position="83"/>
    </location>
    <ligand>
        <name>[4Fe-4S] cluster</name>
        <dbReference type="ChEBI" id="CHEBI:49883"/>
        <label>1</label>
    </ligand>
</feature>
<feature type="binding site" evidence="1">
    <location>
        <position position="154"/>
    </location>
    <ligand>
        <name>[4Fe-4S] cluster</name>
        <dbReference type="ChEBI" id="CHEBI:49883"/>
        <label>2</label>
        <note>4Fe-4S-S-AdoMet</note>
    </ligand>
</feature>
<feature type="binding site" evidence="1">
    <location>
        <position position="158"/>
    </location>
    <ligand>
        <name>[4Fe-4S] cluster</name>
        <dbReference type="ChEBI" id="CHEBI:49883"/>
        <label>2</label>
        <note>4Fe-4S-S-AdoMet</note>
    </ligand>
</feature>
<feature type="binding site" evidence="1">
    <location>
        <position position="161"/>
    </location>
    <ligand>
        <name>[4Fe-4S] cluster</name>
        <dbReference type="ChEBI" id="CHEBI:49883"/>
        <label>2</label>
        <note>4Fe-4S-S-AdoMet</note>
    </ligand>
</feature>
<name>MIAB_THEYD</name>
<organism>
    <name type="scientific">Thermodesulfovibrio yellowstonii (strain ATCC 51303 / DSM 11347 / YP87)</name>
    <dbReference type="NCBI Taxonomy" id="289376"/>
    <lineage>
        <taxon>Bacteria</taxon>
        <taxon>Pseudomonadati</taxon>
        <taxon>Nitrospirota</taxon>
        <taxon>Thermodesulfovibrionia</taxon>
        <taxon>Thermodesulfovibrionales</taxon>
        <taxon>Thermodesulfovibrionaceae</taxon>
        <taxon>Thermodesulfovibrio</taxon>
    </lineage>
</organism>
<dbReference type="EC" id="2.8.4.3" evidence="1"/>
<dbReference type="EMBL" id="CP001147">
    <property type="protein sequence ID" value="ACI21164.1"/>
    <property type="molecule type" value="Genomic_DNA"/>
</dbReference>
<dbReference type="RefSeq" id="WP_012545886.1">
    <property type="nucleotide sequence ID" value="NC_011296.1"/>
</dbReference>
<dbReference type="RefSeq" id="YP_002248877.1">
    <property type="nucleotide sequence ID" value="NC_011296.1"/>
</dbReference>
<dbReference type="SMR" id="B5YKW2"/>
<dbReference type="FunCoup" id="B5YKW2">
    <property type="interactions" value="440"/>
</dbReference>
<dbReference type="STRING" id="289376.THEYE_A1049"/>
<dbReference type="EnsemblBacteria" id="ACI21164">
    <property type="protein sequence ID" value="ACI21164"/>
    <property type="gene ID" value="THEYE_A1049"/>
</dbReference>
<dbReference type="KEGG" id="tye:THEYE_A1049"/>
<dbReference type="PATRIC" id="fig|289376.4.peg.1029"/>
<dbReference type="eggNOG" id="COG0621">
    <property type="taxonomic scope" value="Bacteria"/>
</dbReference>
<dbReference type="HOGENOM" id="CLU_018697_2_0_0"/>
<dbReference type="InParanoid" id="B5YKW2"/>
<dbReference type="OrthoDB" id="9805215at2"/>
<dbReference type="Proteomes" id="UP000000718">
    <property type="component" value="Chromosome"/>
</dbReference>
<dbReference type="GO" id="GO:0005829">
    <property type="term" value="C:cytosol"/>
    <property type="evidence" value="ECO:0000318"/>
    <property type="project" value="GO_Central"/>
</dbReference>
<dbReference type="GO" id="GO:0051539">
    <property type="term" value="F:4 iron, 4 sulfur cluster binding"/>
    <property type="evidence" value="ECO:0000318"/>
    <property type="project" value="GO_Central"/>
</dbReference>
<dbReference type="GO" id="GO:0046872">
    <property type="term" value="F:metal ion binding"/>
    <property type="evidence" value="ECO:0007669"/>
    <property type="project" value="UniProtKB-KW"/>
</dbReference>
<dbReference type="GO" id="GO:0035597">
    <property type="term" value="F:N6-isopentenyladenosine methylthiotransferase activity"/>
    <property type="evidence" value="ECO:0000318"/>
    <property type="project" value="GO_Central"/>
</dbReference>
<dbReference type="GO" id="GO:0035600">
    <property type="term" value="P:tRNA methylthiolation"/>
    <property type="evidence" value="ECO:0000318"/>
    <property type="project" value="GO_Central"/>
</dbReference>
<dbReference type="CDD" id="cd01335">
    <property type="entry name" value="Radical_SAM"/>
    <property type="match status" value="1"/>
</dbReference>
<dbReference type="FunFam" id="3.40.50.12160:FF:000006">
    <property type="entry name" value="tRNA-2-methylthio-N(6)-dimethylallyladenosine synthase"/>
    <property type="match status" value="1"/>
</dbReference>
<dbReference type="FunFam" id="3.80.30.20:FF:000001">
    <property type="entry name" value="tRNA-2-methylthio-N(6)-dimethylallyladenosine synthase 2"/>
    <property type="match status" value="1"/>
</dbReference>
<dbReference type="Gene3D" id="3.40.50.12160">
    <property type="entry name" value="Methylthiotransferase, N-terminal domain"/>
    <property type="match status" value="1"/>
</dbReference>
<dbReference type="Gene3D" id="3.80.30.20">
    <property type="entry name" value="tm_1862 like domain"/>
    <property type="match status" value="1"/>
</dbReference>
<dbReference type="HAMAP" id="MF_01864">
    <property type="entry name" value="tRNA_metthiotr_MiaB"/>
    <property type="match status" value="1"/>
</dbReference>
<dbReference type="InterPro" id="IPR006638">
    <property type="entry name" value="Elp3/MiaA/NifB-like_rSAM"/>
</dbReference>
<dbReference type="InterPro" id="IPR005839">
    <property type="entry name" value="Methylthiotransferase"/>
</dbReference>
<dbReference type="InterPro" id="IPR020612">
    <property type="entry name" value="Methylthiotransferase_CS"/>
</dbReference>
<dbReference type="InterPro" id="IPR013848">
    <property type="entry name" value="Methylthiotransferase_N"/>
</dbReference>
<dbReference type="InterPro" id="IPR038135">
    <property type="entry name" value="Methylthiotransferase_N_sf"/>
</dbReference>
<dbReference type="InterPro" id="IPR006463">
    <property type="entry name" value="MiaB_methiolase"/>
</dbReference>
<dbReference type="InterPro" id="IPR007197">
    <property type="entry name" value="rSAM"/>
</dbReference>
<dbReference type="InterPro" id="IPR023404">
    <property type="entry name" value="rSAM_horseshoe"/>
</dbReference>
<dbReference type="InterPro" id="IPR002792">
    <property type="entry name" value="TRAM_dom"/>
</dbReference>
<dbReference type="NCBIfam" id="TIGR01574">
    <property type="entry name" value="miaB-methiolase"/>
    <property type="match status" value="1"/>
</dbReference>
<dbReference type="NCBIfam" id="TIGR00089">
    <property type="entry name" value="MiaB/RimO family radical SAM methylthiotransferase"/>
    <property type="match status" value="1"/>
</dbReference>
<dbReference type="PANTHER" id="PTHR43020">
    <property type="entry name" value="CDK5 REGULATORY SUBUNIT-ASSOCIATED PROTEIN 1"/>
    <property type="match status" value="1"/>
</dbReference>
<dbReference type="PANTHER" id="PTHR43020:SF2">
    <property type="entry name" value="MITOCHONDRIAL TRNA METHYLTHIOTRANSFERASE CDK5RAP1"/>
    <property type="match status" value="1"/>
</dbReference>
<dbReference type="Pfam" id="PF04055">
    <property type="entry name" value="Radical_SAM"/>
    <property type="match status" value="1"/>
</dbReference>
<dbReference type="Pfam" id="PF01938">
    <property type="entry name" value="TRAM"/>
    <property type="match status" value="1"/>
</dbReference>
<dbReference type="Pfam" id="PF00919">
    <property type="entry name" value="UPF0004"/>
    <property type="match status" value="1"/>
</dbReference>
<dbReference type="SFLD" id="SFLDF00273">
    <property type="entry name" value="(dimethylallyl)adenosine_tRNA"/>
    <property type="match status" value="1"/>
</dbReference>
<dbReference type="SFLD" id="SFLDG01082">
    <property type="entry name" value="B12-binding_domain_containing"/>
    <property type="match status" value="1"/>
</dbReference>
<dbReference type="SFLD" id="SFLDS00029">
    <property type="entry name" value="Radical_SAM"/>
    <property type="match status" value="1"/>
</dbReference>
<dbReference type="SMART" id="SM00729">
    <property type="entry name" value="Elp3"/>
    <property type="match status" value="1"/>
</dbReference>
<dbReference type="SUPFAM" id="SSF102114">
    <property type="entry name" value="Radical SAM enzymes"/>
    <property type="match status" value="1"/>
</dbReference>
<dbReference type="PROSITE" id="PS51449">
    <property type="entry name" value="MTTASE_N"/>
    <property type="match status" value="1"/>
</dbReference>
<dbReference type="PROSITE" id="PS01278">
    <property type="entry name" value="MTTASE_RADICAL"/>
    <property type="match status" value="1"/>
</dbReference>
<dbReference type="PROSITE" id="PS51918">
    <property type="entry name" value="RADICAL_SAM"/>
    <property type="match status" value="1"/>
</dbReference>
<dbReference type="PROSITE" id="PS50926">
    <property type="entry name" value="TRAM"/>
    <property type="match status" value="1"/>
</dbReference>
<keyword id="KW-0004">4Fe-4S</keyword>
<keyword id="KW-0963">Cytoplasm</keyword>
<keyword id="KW-0408">Iron</keyword>
<keyword id="KW-0411">Iron-sulfur</keyword>
<keyword id="KW-0479">Metal-binding</keyword>
<keyword id="KW-1185">Reference proteome</keyword>
<keyword id="KW-0949">S-adenosyl-L-methionine</keyword>
<keyword id="KW-0808">Transferase</keyword>
<keyword id="KW-0819">tRNA processing</keyword>
<accession>B5YKW2</accession>
<sequence>MKGRAVYIKTFGCQMNEHDSERMLGILGTKGFIEVDEPKKADIVIFNTCAIRHKAEQKFFSSLGRVKHLKKKNPQLKIIVAGCSAQLQGEKLLNKLPYIDYIIGPDNLHVIENIIENQVSHRIFTDENPEVANINLPVKRKDCVKAWVNIIYGCNNYCTYCVVPYTRGKERSRPVDDIIKEISLLAEQGYKEVTLLGQNVNSYKDGNTNFPLLLEKVEKIEGIKRIRFITSHPKDLSKELVDVMKDYKKICEHIHLPLQAGSNKILKLMNRKYTYEEYFEKICWLREAIPDIAITSDIIVGFPQEQHEDFEKTINALKEIRFDGIFAFKFSPRLGTAAAKLDGHISEEVKAARLIEVLKLQDEITERKNKRLEGKIQEVLVEGKDEEGFTTGKTRTNKVVKIYSDIKAGEIVNVKIAKTHRHSLEGDIIST</sequence>
<gene>
    <name evidence="1" type="primary">miaB</name>
    <name type="ordered locus">THEYE_A1049</name>
</gene>
<evidence type="ECO:0000255" key="1">
    <source>
        <dbReference type="HAMAP-Rule" id="MF_01864"/>
    </source>
</evidence>
<evidence type="ECO:0000255" key="2">
    <source>
        <dbReference type="PROSITE-ProRule" id="PRU01266"/>
    </source>
</evidence>
<proteinExistence type="inferred from homology"/>
<comment type="function">
    <text evidence="1">Catalyzes the methylthiolation of N6-(dimethylallyl)adenosine (i(6)A), leading to the formation of 2-methylthio-N6-(dimethylallyl)adenosine (ms(2)i(6)A) at position 37 in tRNAs that read codons beginning with uridine.</text>
</comment>
<comment type="catalytic activity">
    <reaction evidence="1">
        <text>N(6)-dimethylallyladenosine(37) in tRNA + (sulfur carrier)-SH + AH2 + 2 S-adenosyl-L-methionine = 2-methylsulfanyl-N(6)-dimethylallyladenosine(37) in tRNA + (sulfur carrier)-H + 5'-deoxyadenosine + L-methionine + A + S-adenosyl-L-homocysteine + 2 H(+)</text>
        <dbReference type="Rhea" id="RHEA:37067"/>
        <dbReference type="Rhea" id="RHEA-COMP:10375"/>
        <dbReference type="Rhea" id="RHEA-COMP:10376"/>
        <dbReference type="Rhea" id="RHEA-COMP:14737"/>
        <dbReference type="Rhea" id="RHEA-COMP:14739"/>
        <dbReference type="ChEBI" id="CHEBI:13193"/>
        <dbReference type="ChEBI" id="CHEBI:15378"/>
        <dbReference type="ChEBI" id="CHEBI:17319"/>
        <dbReference type="ChEBI" id="CHEBI:17499"/>
        <dbReference type="ChEBI" id="CHEBI:29917"/>
        <dbReference type="ChEBI" id="CHEBI:57844"/>
        <dbReference type="ChEBI" id="CHEBI:57856"/>
        <dbReference type="ChEBI" id="CHEBI:59789"/>
        <dbReference type="ChEBI" id="CHEBI:64428"/>
        <dbReference type="ChEBI" id="CHEBI:74415"/>
        <dbReference type="ChEBI" id="CHEBI:74417"/>
        <dbReference type="EC" id="2.8.4.3"/>
    </reaction>
</comment>
<comment type="cofactor">
    <cofactor evidence="1">
        <name>[4Fe-4S] cluster</name>
        <dbReference type="ChEBI" id="CHEBI:49883"/>
    </cofactor>
    <text evidence="1">Binds 2 [4Fe-4S] clusters. One cluster is coordinated with 3 cysteines and an exchangeable S-adenosyl-L-methionine.</text>
</comment>
<comment type="subunit">
    <text evidence="1">Monomer.</text>
</comment>
<comment type="subcellular location">
    <subcellularLocation>
        <location evidence="1">Cytoplasm</location>
    </subcellularLocation>
</comment>
<comment type="similarity">
    <text evidence="1">Belongs to the methylthiotransferase family. MiaB subfamily.</text>
</comment>
<protein>
    <recommendedName>
        <fullName evidence="1">tRNA-2-methylthio-N(6)-dimethylallyladenosine synthase</fullName>
        <ecNumber evidence="1">2.8.4.3</ecNumber>
    </recommendedName>
    <alternativeName>
        <fullName evidence="1">(Dimethylallyl)adenosine tRNA methylthiotransferase MiaB</fullName>
    </alternativeName>
    <alternativeName>
        <fullName evidence="1">tRNA-i(6)A37 methylthiotransferase</fullName>
    </alternativeName>
</protein>
<reference key="1">
    <citation type="submission" date="2008-08" db="EMBL/GenBank/DDBJ databases">
        <title>The complete genome sequence of Thermodesulfovibrio yellowstonii strain ATCC 51303 / DSM 11347 / YP87.</title>
        <authorList>
            <person name="Dodson R.J."/>
            <person name="Durkin A.S."/>
            <person name="Wu M."/>
            <person name="Eisen J."/>
            <person name="Sutton G."/>
        </authorList>
    </citation>
    <scope>NUCLEOTIDE SEQUENCE [LARGE SCALE GENOMIC DNA]</scope>
    <source>
        <strain>ATCC 51303 / DSM 11347 / YP87</strain>
    </source>
</reference>